<geneLocation type="chloroplast"/>
<accession>Q9BBS7</accession>
<gene>
    <name evidence="1" type="primary">rpoC2</name>
</gene>
<proteinExistence type="inferred from homology"/>
<organism>
    <name type="scientific">Lotus japonicus</name>
    <name type="common">Lotus corniculatus var. japonicus</name>
    <dbReference type="NCBI Taxonomy" id="34305"/>
    <lineage>
        <taxon>Eukaryota</taxon>
        <taxon>Viridiplantae</taxon>
        <taxon>Streptophyta</taxon>
        <taxon>Embryophyta</taxon>
        <taxon>Tracheophyta</taxon>
        <taxon>Spermatophyta</taxon>
        <taxon>Magnoliopsida</taxon>
        <taxon>eudicotyledons</taxon>
        <taxon>Gunneridae</taxon>
        <taxon>Pentapetalae</taxon>
        <taxon>rosids</taxon>
        <taxon>fabids</taxon>
        <taxon>Fabales</taxon>
        <taxon>Fabaceae</taxon>
        <taxon>Papilionoideae</taxon>
        <taxon>50 kb inversion clade</taxon>
        <taxon>NPAAA clade</taxon>
        <taxon>Hologalegina</taxon>
        <taxon>robinioid clade</taxon>
        <taxon>Loteae</taxon>
        <taxon>Lotus</taxon>
    </lineage>
</organism>
<protein>
    <recommendedName>
        <fullName evidence="1">DNA-directed RNA polymerase subunit beta''</fullName>
        <ecNumber evidence="1">2.7.7.6</ecNumber>
    </recommendedName>
    <alternativeName>
        <fullName evidence="1">PEP</fullName>
    </alternativeName>
    <alternativeName>
        <fullName evidence="1">Plastid-encoded RNA polymerase subunit beta''</fullName>
        <shortName evidence="1">RNA polymerase subunit beta''</shortName>
    </alternativeName>
</protein>
<feature type="chain" id="PRO_0000067928" description="DNA-directed RNA polymerase subunit beta''">
    <location>
        <begin position="1"/>
        <end position="1332"/>
    </location>
</feature>
<feature type="binding site" evidence="1">
    <location>
        <position position="220"/>
    </location>
    <ligand>
        <name>Zn(2+)</name>
        <dbReference type="ChEBI" id="CHEBI:29105"/>
    </ligand>
</feature>
<feature type="binding site" evidence="1">
    <location>
        <position position="291"/>
    </location>
    <ligand>
        <name>Zn(2+)</name>
        <dbReference type="ChEBI" id="CHEBI:29105"/>
    </ligand>
</feature>
<feature type="binding site" evidence="1">
    <location>
        <position position="298"/>
    </location>
    <ligand>
        <name>Zn(2+)</name>
        <dbReference type="ChEBI" id="CHEBI:29105"/>
    </ligand>
</feature>
<feature type="binding site" evidence="1">
    <location>
        <position position="301"/>
    </location>
    <ligand>
        <name>Zn(2+)</name>
        <dbReference type="ChEBI" id="CHEBI:29105"/>
    </ligand>
</feature>
<dbReference type="EC" id="2.7.7.6" evidence="1"/>
<dbReference type="EMBL" id="AP002983">
    <property type="protein sequence ID" value="BAB33196.1"/>
    <property type="molecule type" value="Genomic_DNA"/>
</dbReference>
<dbReference type="RefSeq" id="NP_084798.1">
    <property type="nucleotide sequence ID" value="NC_002694.1"/>
</dbReference>
<dbReference type="SMR" id="Q9BBS7"/>
<dbReference type="GeneID" id="802880"/>
<dbReference type="GO" id="GO:0009507">
    <property type="term" value="C:chloroplast"/>
    <property type="evidence" value="ECO:0007669"/>
    <property type="project" value="UniProtKB-SubCell"/>
</dbReference>
<dbReference type="GO" id="GO:0000428">
    <property type="term" value="C:DNA-directed RNA polymerase complex"/>
    <property type="evidence" value="ECO:0007669"/>
    <property type="project" value="UniProtKB-KW"/>
</dbReference>
<dbReference type="GO" id="GO:0005739">
    <property type="term" value="C:mitochondrion"/>
    <property type="evidence" value="ECO:0007669"/>
    <property type="project" value="GOC"/>
</dbReference>
<dbReference type="GO" id="GO:0003677">
    <property type="term" value="F:DNA binding"/>
    <property type="evidence" value="ECO:0007669"/>
    <property type="project" value="UniProtKB-UniRule"/>
</dbReference>
<dbReference type="GO" id="GO:0003899">
    <property type="term" value="F:DNA-directed RNA polymerase activity"/>
    <property type="evidence" value="ECO:0007669"/>
    <property type="project" value="UniProtKB-UniRule"/>
</dbReference>
<dbReference type="GO" id="GO:0008270">
    <property type="term" value="F:zinc ion binding"/>
    <property type="evidence" value="ECO:0007669"/>
    <property type="project" value="UniProtKB-UniRule"/>
</dbReference>
<dbReference type="GO" id="GO:0006351">
    <property type="term" value="P:DNA-templated transcription"/>
    <property type="evidence" value="ECO:0007669"/>
    <property type="project" value="UniProtKB-UniRule"/>
</dbReference>
<dbReference type="CDD" id="cd02655">
    <property type="entry name" value="RNAP_beta'_C"/>
    <property type="match status" value="1"/>
</dbReference>
<dbReference type="FunFam" id="1.10.132.30:FF:000002">
    <property type="entry name" value="DNA-directed RNA polymerase subunit beta"/>
    <property type="match status" value="1"/>
</dbReference>
<dbReference type="Gene3D" id="1.10.132.30">
    <property type="match status" value="1"/>
</dbReference>
<dbReference type="Gene3D" id="1.10.150.390">
    <property type="match status" value="1"/>
</dbReference>
<dbReference type="Gene3D" id="1.10.1790.20">
    <property type="match status" value="1"/>
</dbReference>
<dbReference type="Gene3D" id="1.10.274.100">
    <property type="entry name" value="RNA polymerase Rpb1, domain 3"/>
    <property type="match status" value="1"/>
</dbReference>
<dbReference type="HAMAP" id="MF_01324">
    <property type="entry name" value="RNApol_bact_RpoC2"/>
    <property type="match status" value="1"/>
</dbReference>
<dbReference type="InterPro" id="IPR012756">
    <property type="entry name" value="DNA-dir_RpoC2_beta_pp"/>
</dbReference>
<dbReference type="InterPro" id="IPR050254">
    <property type="entry name" value="RNA_pol_beta''_euk"/>
</dbReference>
<dbReference type="InterPro" id="IPR042102">
    <property type="entry name" value="RNA_pol_Rpb1_3_sf"/>
</dbReference>
<dbReference type="InterPro" id="IPR007083">
    <property type="entry name" value="RNA_pol_Rpb1_4"/>
</dbReference>
<dbReference type="InterPro" id="IPR007081">
    <property type="entry name" value="RNA_pol_Rpb1_5"/>
</dbReference>
<dbReference type="InterPro" id="IPR038120">
    <property type="entry name" value="Rpb1_funnel_sf"/>
</dbReference>
<dbReference type="NCBIfam" id="TIGR02388">
    <property type="entry name" value="rpoC2_cyan"/>
    <property type="match status" value="1"/>
</dbReference>
<dbReference type="PANTHER" id="PTHR34995">
    <property type="entry name" value="DNA-DIRECTED RNA POLYMERASE SUBUNIT BETA"/>
    <property type="match status" value="1"/>
</dbReference>
<dbReference type="PANTHER" id="PTHR34995:SF1">
    <property type="entry name" value="DNA-DIRECTED RNA POLYMERASE SUBUNIT BETA"/>
    <property type="match status" value="1"/>
</dbReference>
<dbReference type="Pfam" id="PF05000">
    <property type="entry name" value="RNA_pol_Rpb1_4"/>
    <property type="match status" value="1"/>
</dbReference>
<dbReference type="Pfam" id="PF04998">
    <property type="entry name" value="RNA_pol_Rpb1_5"/>
    <property type="match status" value="2"/>
</dbReference>
<dbReference type="SUPFAM" id="SSF64484">
    <property type="entry name" value="beta and beta-prime subunits of DNA dependent RNA-polymerase"/>
    <property type="match status" value="1"/>
</dbReference>
<sequence>MAERANLVFHNKVIGGTAIKRIISRLIDHFGMAYTSHILDQVKTLGFRQATTTSISLGIDDLLTIPSKGWLVQDAEQQSLILEKHHHYGNVHAVEKLRQSIEIWYATSEYLRQEMNPNFSMTDPFNPVHIMSFSGARGNASQVHQLVGMRGLMSDPQGQMIDLPIQSNLREGLSLTEYIISCYGARKGVVDTAVRTSDAGYLTRRLVEVVQHIVVRRTDCGTVRGISVNTRNRMMSERILIQTLIGRVLADDIYIGSRCIVVRNQDIGIGLINRFINFQTQPIFIRTPFTCRNTSWICRLCYGRSPIHGNLVELGEAVGIIAGQSIGEPGTQLTLRTFHTGGVFTGGTAEYVRSPSNGKIKFNENSAYPTRTRHGHPAFLCYIDLYVTIESNDIMHNVIIPPKSFLLVQNDQYVKSEQIIAEIRAGTYTLNLKEKVRKHIFSDSEGEMHWSTNIYHVSEFAYSNVHILPKTSHLWILSGNSHKSDTVSLSLLKDQDQMSTHSLPTAKRNTSNFLVSNNQVRLCPDHCHFMHPTISPDTSNLLAKKRRNRFIIPFLFRSIRERNNELMPDISVEIPIDGIIHKNSILAYFDDPQYRTQSSGIAKYKTIGIHSIFQKEDLIEYRGIREFKPKYQIKVDRFFFIPQEVHILSESSSIMVRNNSIIGVNTPITLNKKSRVGGLVRVEKNKKKIELKIFSGDIHFPGEIDKISQHSAILIPPEMVKKKNSKESKKKTNWRYIQWITTTKKKYFVLVRPVILYDIADSINLVKLFPQDLFKEWDNLELKVLNFILYGNGKSIRGILDTSIQLVRTCLVLNWNEDEKSSSIEEALASFVEVSTNGLIRYFLRIDLVKSHISYIRKRNDPSSSGLISYNESDRININPFFSIYKENIQQSLSQKHGTIRMLLNRNKENRSFIILSSSNCFQMGPFNNVKYHNGIKEEINQFKRNHKIPIKISLGPLGVAPQIANFFSFYHLITHNKISSIKKNLQLNKFKETFQVIKYYLMDENERIYKPDLYNNIILNPFHLNWDFIHPNYCEKTFPIISLGQFICENVCIVQTKNGPNLKSGQVITVQMDFVGIRLANPYLATPGATIHGHYGEMLYEGDILVTFIYEKSRSGDITQGLPKVEQVLEVRSIDSISMNLEKRIDAWNERITGILGIPWRFLIGAELTIAQSRISLVNKIQRVYRSQGVHIHNRHIEIIVRQITSKVLVSEDGMSNVFSPGELIGLLRAQRTGRALEESICYRTLLLGITKTSLNTQSFISEASFQETARVLAKAALRGRIDWLKGLKENLVLGGIIPVGTGFKKIGDRSSARQDTKITLETIKIIRGRN</sequence>
<reference key="1">
    <citation type="journal article" date="2000" name="DNA Res.">
        <title>Complete structure of the chloroplast genome of a legume, Lotus japonicus.</title>
        <authorList>
            <person name="Kato T."/>
            <person name="Kaneko T."/>
            <person name="Sato S."/>
            <person name="Nakamura Y."/>
            <person name="Tabata S."/>
        </authorList>
    </citation>
    <scope>NUCLEOTIDE SEQUENCE [LARGE SCALE GENOMIC DNA]</scope>
    <source>
        <strain>cv. Miyakojima MG-20</strain>
    </source>
</reference>
<keyword id="KW-0150">Chloroplast</keyword>
<keyword id="KW-0240">DNA-directed RNA polymerase</keyword>
<keyword id="KW-0479">Metal-binding</keyword>
<keyword id="KW-0548">Nucleotidyltransferase</keyword>
<keyword id="KW-0934">Plastid</keyword>
<keyword id="KW-0804">Transcription</keyword>
<keyword id="KW-0808">Transferase</keyword>
<keyword id="KW-0862">Zinc</keyword>
<name>RPOC2_LOTJA</name>
<comment type="function">
    <text evidence="1">DNA-dependent RNA polymerase catalyzes the transcription of DNA into RNA using the four ribonucleoside triphosphates as substrates.</text>
</comment>
<comment type="catalytic activity">
    <reaction evidence="1">
        <text>RNA(n) + a ribonucleoside 5'-triphosphate = RNA(n+1) + diphosphate</text>
        <dbReference type="Rhea" id="RHEA:21248"/>
        <dbReference type="Rhea" id="RHEA-COMP:14527"/>
        <dbReference type="Rhea" id="RHEA-COMP:17342"/>
        <dbReference type="ChEBI" id="CHEBI:33019"/>
        <dbReference type="ChEBI" id="CHEBI:61557"/>
        <dbReference type="ChEBI" id="CHEBI:140395"/>
        <dbReference type="EC" id="2.7.7.6"/>
    </reaction>
</comment>
<comment type="cofactor">
    <cofactor evidence="1">
        <name>Zn(2+)</name>
        <dbReference type="ChEBI" id="CHEBI:29105"/>
    </cofactor>
    <text evidence="1">Binds 1 Zn(2+) ion per subunit.</text>
</comment>
<comment type="subunit">
    <text evidence="1">In plastids the minimal PEP RNA polymerase catalytic core is composed of four subunits: alpha, beta, beta', and beta''. When a (nuclear-encoded) sigma factor is associated with the core the holoenzyme is formed, which can initiate transcription.</text>
</comment>
<comment type="subcellular location">
    <subcellularLocation>
        <location evidence="1">Plastid</location>
        <location evidence="1">Chloroplast</location>
    </subcellularLocation>
</comment>
<comment type="similarity">
    <text evidence="1">Belongs to the RNA polymerase beta' chain family. RpoC2 subfamily.</text>
</comment>
<evidence type="ECO:0000255" key="1">
    <source>
        <dbReference type="HAMAP-Rule" id="MF_01324"/>
    </source>
</evidence>